<proteinExistence type="inferred from homology"/>
<keyword id="KW-0687">Ribonucleoprotein</keyword>
<keyword id="KW-0689">Ribosomal protein</keyword>
<organism>
    <name type="scientific">Saccharolobus islandicus (strain L.S.2.15 / Lassen #1)</name>
    <name type="common">Sulfolobus islandicus</name>
    <dbReference type="NCBI Taxonomy" id="429572"/>
    <lineage>
        <taxon>Archaea</taxon>
        <taxon>Thermoproteota</taxon>
        <taxon>Thermoprotei</taxon>
        <taxon>Sulfolobales</taxon>
        <taxon>Sulfolobaceae</taxon>
        <taxon>Saccharolobus</taxon>
    </lineage>
</organism>
<protein>
    <recommendedName>
        <fullName evidence="1">Large ribosomal subunit protein uL30</fullName>
    </recommendedName>
    <alternativeName>
        <fullName evidence="2">50S ribosomal protein L30</fullName>
    </alternativeName>
</protein>
<dbReference type="EMBL" id="CP001399">
    <property type="protein sequence ID" value="ACP35543.1"/>
    <property type="molecule type" value="Genomic_DNA"/>
</dbReference>
<dbReference type="SMR" id="C3MQ80"/>
<dbReference type="KEGG" id="sis:LS215_1536"/>
<dbReference type="HOGENOM" id="CLU_055156_6_0_2"/>
<dbReference type="OrthoDB" id="6379at2157"/>
<dbReference type="Proteomes" id="UP000001747">
    <property type="component" value="Chromosome"/>
</dbReference>
<dbReference type="GO" id="GO:0022625">
    <property type="term" value="C:cytosolic large ribosomal subunit"/>
    <property type="evidence" value="ECO:0007669"/>
    <property type="project" value="TreeGrafter"/>
</dbReference>
<dbReference type="GO" id="GO:0003723">
    <property type="term" value="F:RNA binding"/>
    <property type="evidence" value="ECO:0007669"/>
    <property type="project" value="TreeGrafter"/>
</dbReference>
<dbReference type="GO" id="GO:0003735">
    <property type="term" value="F:structural constituent of ribosome"/>
    <property type="evidence" value="ECO:0007669"/>
    <property type="project" value="InterPro"/>
</dbReference>
<dbReference type="GO" id="GO:0000463">
    <property type="term" value="P:maturation of LSU-rRNA from tricistronic rRNA transcript (SSU-rRNA, 5.8S rRNA, LSU-rRNA)"/>
    <property type="evidence" value="ECO:0007669"/>
    <property type="project" value="TreeGrafter"/>
</dbReference>
<dbReference type="GO" id="GO:0006412">
    <property type="term" value="P:translation"/>
    <property type="evidence" value="ECO:0007669"/>
    <property type="project" value="UniProtKB-UniRule"/>
</dbReference>
<dbReference type="CDD" id="cd01657">
    <property type="entry name" value="Ribosomal_L7_archeal_euk"/>
    <property type="match status" value="1"/>
</dbReference>
<dbReference type="Gene3D" id="1.10.15.30">
    <property type="match status" value="1"/>
</dbReference>
<dbReference type="Gene3D" id="3.30.1390.20">
    <property type="entry name" value="Ribosomal protein L30, ferredoxin-like fold domain"/>
    <property type="match status" value="1"/>
</dbReference>
<dbReference type="HAMAP" id="MF_01371_A">
    <property type="entry name" value="Ribosomal_uL30_A"/>
    <property type="match status" value="1"/>
</dbReference>
<dbReference type="InterPro" id="IPR036919">
    <property type="entry name" value="Ribo_uL30_ferredoxin-like_sf"/>
</dbReference>
<dbReference type="InterPro" id="IPR039699">
    <property type="entry name" value="Ribosomal_uL30"/>
</dbReference>
<dbReference type="InterPro" id="IPR005997">
    <property type="entry name" value="Ribosomal_uL30_arc"/>
</dbReference>
<dbReference type="InterPro" id="IPR035808">
    <property type="entry name" value="Ribosomal_uL30_euk_arc"/>
</dbReference>
<dbReference type="InterPro" id="IPR016082">
    <property type="entry name" value="Ribosomal_uL30_ferredoxin-like"/>
</dbReference>
<dbReference type="NCBIfam" id="NF004711">
    <property type="entry name" value="PRK06049.1"/>
    <property type="match status" value="1"/>
</dbReference>
<dbReference type="NCBIfam" id="TIGR01309">
    <property type="entry name" value="uL30_arch"/>
    <property type="match status" value="1"/>
</dbReference>
<dbReference type="PANTHER" id="PTHR11524">
    <property type="entry name" value="60S RIBOSOMAL PROTEIN L7"/>
    <property type="match status" value="1"/>
</dbReference>
<dbReference type="PANTHER" id="PTHR11524:SF16">
    <property type="entry name" value="LARGE RIBOSOMAL SUBUNIT PROTEIN UL30"/>
    <property type="match status" value="1"/>
</dbReference>
<dbReference type="Pfam" id="PF00327">
    <property type="entry name" value="Ribosomal_L30"/>
    <property type="match status" value="1"/>
</dbReference>
<dbReference type="SUPFAM" id="SSF55129">
    <property type="entry name" value="Ribosomal protein L30p/L7e"/>
    <property type="match status" value="1"/>
</dbReference>
<evidence type="ECO:0000255" key="1">
    <source>
        <dbReference type="HAMAP-Rule" id="MF_01371"/>
    </source>
</evidence>
<evidence type="ECO:0000305" key="2"/>
<comment type="subunit">
    <text evidence="1">Part of the 50S ribosomal subunit.</text>
</comment>
<comment type="similarity">
    <text evidence="1">Belongs to the universal ribosomal protein uL30 family.</text>
</comment>
<sequence length="158" mass="18648">MVELLGIIRIRGWAKAPWYINETLEMLRLRYNFNTMMYPKTSQILGMLNKVSPYVTWGEIDPDTLKLLIIKRLETAKGDKVSDSYVKEVLKIENIDTMVKQLYEGKIYLHKLDQYFKLPIRLHPPKGGFKGSVKRPYKNKGEFGYRGDKINELMRRMM</sequence>
<reference key="1">
    <citation type="journal article" date="2009" name="Proc. Natl. Acad. Sci. U.S.A.">
        <title>Biogeography of the Sulfolobus islandicus pan-genome.</title>
        <authorList>
            <person name="Reno M.L."/>
            <person name="Held N.L."/>
            <person name="Fields C.J."/>
            <person name="Burke P.V."/>
            <person name="Whitaker R.J."/>
        </authorList>
    </citation>
    <scope>NUCLEOTIDE SEQUENCE [LARGE SCALE GENOMIC DNA]</scope>
    <source>
        <strain>L.S.2.15 / Lassen #1</strain>
    </source>
</reference>
<gene>
    <name evidence="1" type="primary">rpl30</name>
    <name type="ordered locus">LS215_1536</name>
</gene>
<feature type="chain" id="PRO_1000215077" description="Large ribosomal subunit protein uL30">
    <location>
        <begin position="1"/>
        <end position="158"/>
    </location>
</feature>
<accession>C3MQ80</accession>
<name>RL30_SACI2</name>